<reference key="1">
    <citation type="journal article" date="2001" name="Proc. Natl. Acad. Sci. U.S.A.">
        <title>Analysis of the chromosome sequence of the legume symbiont Sinorhizobium meliloti strain 1021.</title>
        <authorList>
            <person name="Capela D."/>
            <person name="Barloy-Hubler F."/>
            <person name="Gouzy J."/>
            <person name="Bothe G."/>
            <person name="Ampe F."/>
            <person name="Batut J."/>
            <person name="Boistard P."/>
            <person name="Becker A."/>
            <person name="Boutry M."/>
            <person name="Cadieu E."/>
            <person name="Dreano S."/>
            <person name="Gloux S."/>
            <person name="Godrie T."/>
            <person name="Goffeau A."/>
            <person name="Kahn D."/>
            <person name="Kiss E."/>
            <person name="Lelaure V."/>
            <person name="Masuy D."/>
            <person name="Pohl T."/>
            <person name="Portetelle D."/>
            <person name="Puehler A."/>
            <person name="Purnelle B."/>
            <person name="Ramsperger U."/>
            <person name="Renard C."/>
            <person name="Thebault P."/>
            <person name="Vandenbol M."/>
            <person name="Weidner S."/>
            <person name="Galibert F."/>
        </authorList>
    </citation>
    <scope>NUCLEOTIDE SEQUENCE [LARGE SCALE GENOMIC DNA]</scope>
    <source>
        <strain>1021</strain>
    </source>
</reference>
<reference key="2">
    <citation type="journal article" date="2001" name="Science">
        <title>The composite genome of the legume symbiont Sinorhizobium meliloti.</title>
        <authorList>
            <person name="Galibert F."/>
            <person name="Finan T.M."/>
            <person name="Long S.R."/>
            <person name="Puehler A."/>
            <person name="Abola P."/>
            <person name="Ampe F."/>
            <person name="Barloy-Hubler F."/>
            <person name="Barnett M.J."/>
            <person name="Becker A."/>
            <person name="Boistard P."/>
            <person name="Bothe G."/>
            <person name="Boutry M."/>
            <person name="Bowser L."/>
            <person name="Buhrmester J."/>
            <person name="Cadieu E."/>
            <person name="Capela D."/>
            <person name="Chain P."/>
            <person name="Cowie A."/>
            <person name="Davis R.W."/>
            <person name="Dreano S."/>
            <person name="Federspiel N.A."/>
            <person name="Fisher R.F."/>
            <person name="Gloux S."/>
            <person name="Godrie T."/>
            <person name="Goffeau A."/>
            <person name="Golding B."/>
            <person name="Gouzy J."/>
            <person name="Gurjal M."/>
            <person name="Hernandez-Lucas I."/>
            <person name="Hong A."/>
            <person name="Huizar L."/>
            <person name="Hyman R.W."/>
            <person name="Jones T."/>
            <person name="Kahn D."/>
            <person name="Kahn M.L."/>
            <person name="Kalman S."/>
            <person name="Keating D.H."/>
            <person name="Kiss E."/>
            <person name="Komp C."/>
            <person name="Lelaure V."/>
            <person name="Masuy D."/>
            <person name="Palm C."/>
            <person name="Peck M.C."/>
            <person name="Pohl T.M."/>
            <person name="Portetelle D."/>
            <person name="Purnelle B."/>
            <person name="Ramsperger U."/>
            <person name="Surzycki R."/>
            <person name="Thebault P."/>
            <person name="Vandenbol M."/>
            <person name="Vorhoelter F.J."/>
            <person name="Weidner S."/>
            <person name="Wells D.H."/>
            <person name="Wong K."/>
            <person name="Yeh K.-C."/>
            <person name="Batut J."/>
        </authorList>
    </citation>
    <scope>NUCLEOTIDE SEQUENCE [LARGE SCALE GENOMIC DNA]</scope>
    <source>
        <strain>1021</strain>
    </source>
</reference>
<gene>
    <name evidence="1" type="primary">dapF</name>
    <name type="ordered locus">R03239</name>
    <name type="ORF">SMc03856</name>
</gene>
<evidence type="ECO:0000255" key="1">
    <source>
        <dbReference type="HAMAP-Rule" id="MF_00197"/>
    </source>
</evidence>
<evidence type="ECO:0000305" key="2"/>
<organism>
    <name type="scientific">Rhizobium meliloti (strain 1021)</name>
    <name type="common">Ensifer meliloti</name>
    <name type="synonym">Sinorhizobium meliloti</name>
    <dbReference type="NCBI Taxonomy" id="266834"/>
    <lineage>
        <taxon>Bacteria</taxon>
        <taxon>Pseudomonadati</taxon>
        <taxon>Pseudomonadota</taxon>
        <taxon>Alphaproteobacteria</taxon>
        <taxon>Hyphomicrobiales</taxon>
        <taxon>Rhizobiaceae</taxon>
        <taxon>Sinorhizobium/Ensifer group</taxon>
        <taxon>Sinorhizobium</taxon>
    </lineage>
</organism>
<proteinExistence type="inferred from homology"/>
<dbReference type="EC" id="5.1.1.7" evidence="1"/>
<dbReference type="EMBL" id="AL591688">
    <property type="protein sequence ID" value="CAC47818.1"/>
    <property type="status" value="ALT_INIT"/>
    <property type="molecule type" value="Genomic_DNA"/>
</dbReference>
<dbReference type="RefSeq" id="NP_387345.1">
    <property type="nucleotide sequence ID" value="NC_003047.1"/>
</dbReference>
<dbReference type="RefSeq" id="WP_013844926.1">
    <property type="nucleotide sequence ID" value="NC_003047.1"/>
</dbReference>
<dbReference type="SMR" id="Q92L46"/>
<dbReference type="EnsemblBacteria" id="CAC47818">
    <property type="protein sequence ID" value="CAC47818"/>
    <property type="gene ID" value="SMc03856"/>
</dbReference>
<dbReference type="KEGG" id="sme:SMc03856"/>
<dbReference type="PATRIC" id="fig|266834.11.peg.4792"/>
<dbReference type="eggNOG" id="COG0253">
    <property type="taxonomic scope" value="Bacteria"/>
</dbReference>
<dbReference type="HOGENOM" id="CLU_053306_1_0_5"/>
<dbReference type="OrthoDB" id="9805408at2"/>
<dbReference type="UniPathway" id="UPA00034">
    <property type="reaction ID" value="UER00025"/>
</dbReference>
<dbReference type="Proteomes" id="UP000001976">
    <property type="component" value="Chromosome"/>
</dbReference>
<dbReference type="GO" id="GO:0005829">
    <property type="term" value="C:cytosol"/>
    <property type="evidence" value="ECO:0007669"/>
    <property type="project" value="TreeGrafter"/>
</dbReference>
<dbReference type="GO" id="GO:0008837">
    <property type="term" value="F:diaminopimelate epimerase activity"/>
    <property type="evidence" value="ECO:0007669"/>
    <property type="project" value="UniProtKB-UniRule"/>
</dbReference>
<dbReference type="GO" id="GO:0009089">
    <property type="term" value="P:lysine biosynthetic process via diaminopimelate"/>
    <property type="evidence" value="ECO:0007669"/>
    <property type="project" value="UniProtKB-UniRule"/>
</dbReference>
<dbReference type="Gene3D" id="3.10.310.10">
    <property type="entry name" value="Diaminopimelate Epimerase, Chain A, domain 1"/>
    <property type="match status" value="2"/>
</dbReference>
<dbReference type="HAMAP" id="MF_00197">
    <property type="entry name" value="DAP_epimerase"/>
    <property type="match status" value="1"/>
</dbReference>
<dbReference type="InterPro" id="IPR018510">
    <property type="entry name" value="DAP_epimerase_AS"/>
</dbReference>
<dbReference type="InterPro" id="IPR001653">
    <property type="entry name" value="DAP_epimerase_DapF"/>
</dbReference>
<dbReference type="NCBIfam" id="TIGR00652">
    <property type="entry name" value="DapF"/>
    <property type="match status" value="1"/>
</dbReference>
<dbReference type="PANTHER" id="PTHR31689:SF0">
    <property type="entry name" value="DIAMINOPIMELATE EPIMERASE"/>
    <property type="match status" value="1"/>
</dbReference>
<dbReference type="PANTHER" id="PTHR31689">
    <property type="entry name" value="DIAMINOPIMELATE EPIMERASE, CHLOROPLASTIC"/>
    <property type="match status" value="1"/>
</dbReference>
<dbReference type="Pfam" id="PF01678">
    <property type="entry name" value="DAP_epimerase"/>
    <property type="match status" value="2"/>
</dbReference>
<dbReference type="SUPFAM" id="SSF54506">
    <property type="entry name" value="Diaminopimelate epimerase-like"/>
    <property type="match status" value="2"/>
</dbReference>
<dbReference type="PROSITE" id="PS01326">
    <property type="entry name" value="DAP_EPIMERASE"/>
    <property type="match status" value="1"/>
</dbReference>
<feature type="chain" id="PRO_0000149865" description="Diaminopimelate epimerase">
    <location>
        <begin position="1"/>
        <end position="301"/>
    </location>
</feature>
<feature type="active site" description="Proton donor" evidence="1">
    <location>
        <position position="76"/>
    </location>
</feature>
<feature type="active site" description="Proton acceptor" evidence="1">
    <location>
        <position position="224"/>
    </location>
</feature>
<feature type="binding site" evidence="1">
    <location>
        <position position="15"/>
    </location>
    <ligand>
        <name>substrate</name>
    </ligand>
</feature>
<feature type="binding site" evidence="1">
    <location>
        <position position="47"/>
    </location>
    <ligand>
        <name>substrate</name>
    </ligand>
</feature>
<feature type="binding site" evidence="1">
    <location>
        <position position="67"/>
    </location>
    <ligand>
        <name>substrate</name>
    </ligand>
</feature>
<feature type="binding site" evidence="1">
    <location>
        <begin position="77"/>
        <end position="78"/>
    </location>
    <ligand>
        <name>substrate</name>
    </ligand>
</feature>
<feature type="binding site" evidence="1">
    <location>
        <position position="163"/>
    </location>
    <ligand>
        <name>substrate</name>
    </ligand>
</feature>
<feature type="binding site" evidence="1">
    <location>
        <position position="197"/>
    </location>
    <ligand>
        <name>substrate</name>
    </ligand>
</feature>
<feature type="binding site" evidence="1">
    <location>
        <begin position="215"/>
        <end position="216"/>
    </location>
    <ligand>
        <name>substrate</name>
    </ligand>
</feature>
<feature type="binding site" evidence="1">
    <location>
        <begin position="225"/>
        <end position="226"/>
    </location>
    <ligand>
        <name>substrate</name>
    </ligand>
</feature>
<feature type="site" description="Could be important to modulate the pK values of the two catalytic cysteine residues" evidence="1">
    <location>
        <position position="165"/>
    </location>
</feature>
<feature type="site" description="Could be important to modulate the pK values of the two catalytic cysteine residues" evidence="1">
    <location>
        <position position="215"/>
    </location>
</feature>
<accession>Q92L46</accession>
<protein>
    <recommendedName>
        <fullName evidence="1">Diaminopimelate epimerase</fullName>
        <shortName evidence="1">DAP epimerase</shortName>
        <ecNumber evidence="1">5.1.1.7</ecNumber>
    </recommendedName>
    <alternativeName>
        <fullName evidence="1">PLP-independent amino acid racemase</fullName>
    </alternativeName>
</protein>
<name>DAPF_RHIME</name>
<comment type="function">
    <text evidence="1">Catalyzes the stereoinversion of LL-2,6-diaminopimelate (L,L-DAP) to meso-diaminopimelate (meso-DAP), a precursor of L-lysine and an essential component of the bacterial peptidoglycan.</text>
</comment>
<comment type="catalytic activity">
    <reaction evidence="1">
        <text>(2S,6S)-2,6-diaminopimelate = meso-2,6-diaminopimelate</text>
        <dbReference type="Rhea" id="RHEA:15393"/>
        <dbReference type="ChEBI" id="CHEBI:57609"/>
        <dbReference type="ChEBI" id="CHEBI:57791"/>
        <dbReference type="EC" id="5.1.1.7"/>
    </reaction>
</comment>
<comment type="pathway">
    <text evidence="1">Amino-acid biosynthesis; L-lysine biosynthesis via DAP pathway; DL-2,6-diaminopimelate from LL-2,6-diaminopimelate: step 1/1.</text>
</comment>
<comment type="subunit">
    <text evidence="1">Homodimer.</text>
</comment>
<comment type="subcellular location">
    <subcellularLocation>
        <location evidence="1">Cytoplasm</location>
    </subcellularLocation>
</comment>
<comment type="similarity">
    <text evidence="1">Belongs to the diaminopimelate epimerase family.</text>
</comment>
<comment type="sequence caution" evidence="2">
    <conflict type="erroneous initiation">
        <sequence resource="EMBL-CDS" id="CAC47818"/>
    </conflict>
    <text>Extended N-terminus.</text>
</comment>
<keyword id="KW-0028">Amino-acid biosynthesis</keyword>
<keyword id="KW-0963">Cytoplasm</keyword>
<keyword id="KW-0413">Isomerase</keyword>
<keyword id="KW-0457">Lysine biosynthesis</keyword>
<keyword id="KW-1185">Reference proteome</keyword>
<sequence length="301" mass="32859">MGDQVQFARMNGLGNKILVVDMRGRKDRVTPQAAIALNADPATEFDQIMAIHDPKSAGTDAWIDIVNSDGSMAQACGNGTRCVVQALAAETGRKAFLFHTVAGLLEAKEHDNGTISVDMGKPRFGWDQIPLAEEFHDTRRIELQIGPIDAPVLHSPSVASMGNPHAIFWVENDVWSYELDRFGPLLENHPIFPERANISIARIRSRQEMDLRTWERGAGLTLACGSAACAAAVNGARTGRTERMVTVNVPGGPLKIEWRERDDHVIMTGPAEWEWSGTVDPVTGIFARNEPESGDNGARAL</sequence>